<sequence>MLTKEQLQHLKNELEQTKKDILNRFKDNDHFQLNSAFPYDSWGELSAYDNHPGDQATELYEREKDIALDLHEREHLRDIEHSLKAIENGTYGICEVSGKEIPFERLEALPTATTLAEYSSQDVVSKDRPIEEETPFGQFEFDDDEEIRAPYDSEDSYQDVEKYGNSQTPQDMENPPLSYDDMTMNAEENIGNTESYENFIATDITGKEITVYQSRAHERYEEELDEEGIMTTFGDLHAD</sequence>
<comment type="sequence caution" evidence="3">
    <conflict type="frameshift">
        <sequence resource="EMBL-CDS" id="AAC00368"/>
    </conflict>
</comment>
<organism>
    <name type="scientific">Bacillus subtilis (strain 168)</name>
    <dbReference type="NCBI Taxonomy" id="224308"/>
    <lineage>
        <taxon>Bacteria</taxon>
        <taxon>Bacillati</taxon>
        <taxon>Bacillota</taxon>
        <taxon>Bacilli</taxon>
        <taxon>Bacillales</taxon>
        <taxon>Bacillaceae</taxon>
        <taxon>Bacillus</taxon>
    </lineage>
</organism>
<gene>
    <name type="primary">yteA</name>
    <name type="synonym">yzwB</name>
    <name type="ordered locus">BSU30840</name>
</gene>
<dbReference type="EMBL" id="U20447">
    <property type="protein sequence ID" value="AAA62288.1"/>
    <property type="molecule type" value="Genomic_DNA"/>
</dbReference>
<dbReference type="EMBL" id="AF008220">
    <property type="protein sequence ID" value="AAC00368.1"/>
    <property type="status" value="ALT_FRAME"/>
    <property type="molecule type" value="Genomic_DNA"/>
</dbReference>
<dbReference type="EMBL" id="AL009126">
    <property type="protein sequence ID" value="CAB15062.2"/>
    <property type="molecule type" value="Genomic_DNA"/>
</dbReference>
<dbReference type="PIR" id="D69990">
    <property type="entry name" value="D69990"/>
</dbReference>
<dbReference type="RefSeq" id="NP_390962.2">
    <property type="nucleotide sequence ID" value="NC_000964.3"/>
</dbReference>
<dbReference type="RefSeq" id="WP_003229046.1">
    <property type="nucleotide sequence ID" value="NZ_OZ025638.1"/>
</dbReference>
<dbReference type="SMR" id="P42408"/>
<dbReference type="FunCoup" id="P42408">
    <property type="interactions" value="200"/>
</dbReference>
<dbReference type="STRING" id="224308.BSU30840"/>
<dbReference type="PaxDb" id="224308-BSU30840"/>
<dbReference type="EnsemblBacteria" id="CAB15062">
    <property type="protein sequence ID" value="CAB15062"/>
    <property type="gene ID" value="BSU_30840"/>
</dbReference>
<dbReference type="GeneID" id="937192"/>
<dbReference type="KEGG" id="bsu:BSU30840"/>
<dbReference type="PATRIC" id="fig|224308.179.peg.3343"/>
<dbReference type="eggNOG" id="COG1734">
    <property type="taxonomic scope" value="Bacteria"/>
</dbReference>
<dbReference type="InParanoid" id="P42408"/>
<dbReference type="OrthoDB" id="9811543at2"/>
<dbReference type="PhylomeDB" id="P42408"/>
<dbReference type="BioCyc" id="BSUB:BSU30840-MONOMER"/>
<dbReference type="Proteomes" id="UP000001570">
    <property type="component" value="Chromosome"/>
</dbReference>
<dbReference type="GO" id="GO:0008270">
    <property type="term" value="F:zinc ion binding"/>
    <property type="evidence" value="ECO:0007669"/>
    <property type="project" value="UniProtKB-KW"/>
</dbReference>
<dbReference type="Gene3D" id="1.20.120.910">
    <property type="entry name" value="DksA, coiled-coil domain"/>
    <property type="match status" value="1"/>
</dbReference>
<dbReference type="InterPro" id="IPR037187">
    <property type="entry name" value="DnaK_N"/>
</dbReference>
<dbReference type="InterPro" id="IPR014240">
    <property type="entry name" value="YteA"/>
</dbReference>
<dbReference type="InterPro" id="IPR000962">
    <property type="entry name" value="Znf_DskA_TraR"/>
</dbReference>
<dbReference type="NCBIfam" id="TIGR02890">
    <property type="entry name" value="bacill_yteA"/>
    <property type="match status" value="1"/>
</dbReference>
<dbReference type="PANTHER" id="PTHR33823:SF4">
    <property type="entry name" value="GENERAL STRESS PROTEIN 16O"/>
    <property type="match status" value="1"/>
</dbReference>
<dbReference type="PANTHER" id="PTHR33823">
    <property type="entry name" value="RNA POLYMERASE-BINDING TRANSCRIPTION FACTOR DKSA-RELATED"/>
    <property type="match status" value="1"/>
</dbReference>
<dbReference type="Pfam" id="PF01258">
    <property type="entry name" value="zf-dskA_traR"/>
    <property type="match status" value="1"/>
</dbReference>
<dbReference type="SUPFAM" id="SSF109635">
    <property type="entry name" value="DnaK suppressor protein DksA, alpha-hairpin domain"/>
    <property type="match status" value="1"/>
</dbReference>
<dbReference type="PROSITE" id="PS01102">
    <property type="entry name" value="ZF_DKSA_1"/>
    <property type="match status" value="1"/>
</dbReference>
<dbReference type="PROSITE" id="PS51128">
    <property type="entry name" value="ZF_DKSA_2"/>
    <property type="match status" value="1"/>
</dbReference>
<proteinExistence type="predicted"/>
<accession>P42408</accession>
<accession>O34602</accession>
<feature type="chain" id="PRO_0000187555" description="Uncharacterized protein YteA">
    <location>
        <begin position="1"/>
        <end position="239"/>
    </location>
</feature>
<feature type="zinc finger region" description="dksA C4-type; degenerate" evidence="1">
    <location>
        <begin position="94"/>
        <end position="114"/>
    </location>
</feature>
<feature type="region of interest" description="Disordered" evidence="2">
    <location>
        <begin position="133"/>
        <end position="182"/>
    </location>
</feature>
<feature type="compositionally biased region" description="Acidic residues" evidence="2">
    <location>
        <begin position="133"/>
        <end position="158"/>
    </location>
</feature>
<evidence type="ECO:0000255" key="1">
    <source>
        <dbReference type="PROSITE-ProRule" id="PRU00510"/>
    </source>
</evidence>
<evidence type="ECO:0000256" key="2">
    <source>
        <dbReference type="SAM" id="MobiDB-lite"/>
    </source>
</evidence>
<evidence type="ECO:0000305" key="3"/>
<protein>
    <recommendedName>
        <fullName>Uncharacterized protein YteA</fullName>
    </recommendedName>
    <alternativeName>
        <fullName>ORFQ</fullName>
    </alternativeName>
</protein>
<name>YTEA_BACSU</name>
<keyword id="KW-0479">Metal-binding</keyword>
<keyword id="KW-1185">Reference proteome</keyword>
<keyword id="KW-0862">Zinc</keyword>
<keyword id="KW-0863">Zinc-finger</keyword>
<reference key="1">
    <citation type="submission" date="1995-01" db="EMBL/GenBank/DDBJ databases">
        <authorList>
            <person name="Qin X."/>
            <person name="Taber H.W."/>
        </authorList>
    </citation>
    <scope>NUCLEOTIDE SEQUENCE [GENOMIC DNA]</scope>
    <source>
        <strain>168 / RB1</strain>
    </source>
</reference>
<reference key="2">
    <citation type="journal article" date="1997" name="Microbiology">
        <title>Sequencing and functional annotation of the Bacillus subtilis genes in the 200 kb rrnB-dnaB region.</title>
        <authorList>
            <person name="Lapidus A."/>
            <person name="Galleron N."/>
            <person name="Sorokin A."/>
            <person name="Ehrlich S.D."/>
        </authorList>
    </citation>
    <scope>NUCLEOTIDE SEQUENCE [GENOMIC DNA]</scope>
    <source>
        <strain>168</strain>
    </source>
</reference>
<reference key="3">
    <citation type="journal article" date="1997" name="Nature">
        <title>The complete genome sequence of the Gram-positive bacterium Bacillus subtilis.</title>
        <authorList>
            <person name="Kunst F."/>
            <person name="Ogasawara N."/>
            <person name="Moszer I."/>
            <person name="Albertini A.M."/>
            <person name="Alloni G."/>
            <person name="Azevedo V."/>
            <person name="Bertero M.G."/>
            <person name="Bessieres P."/>
            <person name="Bolotin A."/>
            <person name="Borchert S."/>
            <person name="Borriss R."/>
            <person name="Boursier L."/>
            <person name="Brans A."/>
            <person name="Braun M."/>
            <person name="Brignell S.C."/>
            <person name="Bron S."/>
            <person name="Brouillet S."/>
            <person name="Bruschi C.V."/>
            <person name="Caldwell B."/>
            <person name="Capuano V."/>
            <person name="Carter N.M."/>
            <person name="Choi S.-K."/>
            <person name="Codani J.-J."/>
            <person name="Connerton I.F."/>
            <person name="Cummings N.J."/>
            <person name="Daniel R.A."/>
            <person name="Denizot F."/>
            <person name="Devine K.M."/>
            <person name="Duesterhoeft A."/>
            <person name="Ehrlich S.D."/>
            <person name="Emmerson P.T."/>
            <person name="Entian K.-D."/>
            <person name="Errington J."/>
            <person name="Fabret C."/>
            <person name="Ferrari E."/>
            <person name="Foulger D."/>
            <person name="Fritz C."/>
            <person name="Fujita M."/>
            <person name="Fujita Y."/>
            <person name="Fuma S."/>
            <person name="Galizzi A."/>
            <person name="Galleron N."/>
            <person name="Ghim S.-Y."/>
            <person name="Glaser P."/>
            <person name="Goffeau A."/>
            <person name="Golightly E.J."/>
            <person name="Grandi G."/>
            <person name="Guiseppi G."/>
            <person name="Guy B.J."/>
            <person name="Haga K."/>
            <person name="Haiech J."/>
            <person name="Harwood C.R."/>
            <person name="Henaut A."/>
            <person name="Hilbert H."/>
            <person name="Holsappel S."/>
            <person name="Hosono S."/>
            <person name="Hullo M.-F."/>
            <person name="Itaya M."/>
            <person name="Jones L.-M."/>
            <person name="Joris B."/>
            <person name="Karamata D."/>
            <person name="Kasahara Y."/>
            <person name="Klaerr-Blanchard M."/>
            <person name="Klein C."/>
            <person name="Kobayashi Y."/>
            <person name="Koetter P."/>
            <person name="Koningstein G."/>
            <person name="Krogh S."/>
            <person name="Kumano M."/>
            <person name="Kurita K."/>
            <person name="Lapidus A."/>
            <person name="Lardinois S."/>
            <person name="Lauber J."/>
            <person name="Lazarevic V."/>
            <person name="Lee S.-M."/>
            <person name="Levine A."/>
            <person name="Liu H."/>
            <person name="Masuda S."/>
            <person name="Mauel C."/>
            <person name="Medigue C."/>
            <person name="Medina N."/>
            <person name="Mellado R.P."/>
            <person name="Mizuno M."/>
            <person name="Moestl D."/>
            <person name="Nakai S."/>
            <person name="Noback M."/>
            <person name="Noone D."/>
            <person name="O'Reilly M."/>
            <person name="Ogawa K."/>
            <person name="Ogiwara A."/>
            <person name="Oudega B."/>
            <person name="Park S.-H."/>
            <person name="Parro V."/>
            <person name="Pohl T.M."/>
            <person name="Portetelle D."/>
            <person name="Porwollik S."/>
            <person name="Prescott A.M."/>
            <person name="Presecan E."/>
            <person name="Pujic P."/>
            <person name="Purnelle B."/>
            <person name="Rapoport G."/>
            <person name="Rey M."/>
            <person name="Reynolds S."/>
            <person name="Rieger M."/>
            <person name="Rivolta C."/>
            <person name="Rocha E."/>
            <person name="Roche B."/>
            <person name="Rose M."/>
            <person name="Sadaie Y."/>
            <person name="Sato T."/>
            <person name="Scanlan E."/>
            <person name="Schleich S."/>
            <person name="Schroeter R."/>
            <person name="Scoffone F."/>
            <person name="Sekiguchi J."/>
            <person name="Sekowska A."/>
            <person name="Seror S.J."/>
            <person name="Serror P."/>
            <person name="Shin B.-S."/>
            <person name="Soldo B."/>
            <person name="Sorokin A."/>
            <person name="Tacconi E."/>
            <person name="Takagi T."/>
            <person name="Takahashi H."/>
            <person name="Takemaru K."/>
            <person name="Takeuchi M."/>
            <person name="Tamakoshi A."/>
            <person name="Tanaka T."/>
            <person name="Terpstra P."/>
            <person name="Tognoni A."/>
            <person name="Tosato V."/>
            <person name="Uchiyama S."/>
            <person name="Vandenbol M."/>
            <person name="Vannier F."/>
            <person name="Vassarotti A."/>
            <person name="Viari A."/>
            <person name="Wambutt R."/>
            <person name="Wedler E."/>
            <person name="Wedler H."/>
            <person name="Weitzenegger T."/>
            <person name="Winters P."/>
            <person name="Wipat A."/>
            <person name="Yamamoto H."/>
            <person name="Yamane K."/>
            <person name="Yasumoto K."/>
            <person name="Yata K."/>
            <person name="Yoshida K."/>
            <person name="Yoshikawa H.-F."/>
            <person name="Zumstein E."/>
            <person name="Yoshikawa H."/>
            <person name="Danchin A."/>
        </authorList>
    </citation>
    <scope>NUCLEOTIDE SEQUENCE [LARGE SCALE GENOMIC DNA]</scope>
    <source>
        <strain>168</strain>
    </source>
</reference>
<reference key="4">
    <citation type="journal article" date="1999" name="Genome Res.">
        <title>Detecting and analyzing DNA sequencing errors: toward a higher quality of the Bacillus subtilis genome sequence.</title>
        <authorList>
            <person name="Medigue C."/>
            <person name="Rose M."/>
            <person name="Viari A."/>
            <person name="Danchin A."/>
        </authorList>
    </citation>
    <scope>SEQUENCE REVISION TO C-TERMINUS</scope>
</reference>